<proteinExistence type="inferred from homology"/>
<organism>
    <name type="scientific">Sodalis glossinidius (strain morsitans)</name>
    <dbReference type="NCBI Taxonomy" id="343509"/>
    <lineage>
        <taxon>Bacteria</taxon>
        <taxon>Pseudomonadati</taxon>
        <taxon>Pseudomonadota</taxon>
        <taxon>Gammaproteobacteria</taxon>
        <taxon>Enterobacterales</taxon>
        <taxon>Bruguierivoracaceae</taxon>
        <taxon>Sodalis</taxon>
    </lineage>
</organism>
<dbReference type="EC" id="2.7.7.6" evidence="1"/>
<dbReference type="EMBL" id="AP008232">
    <property type="protein sequence ID" value="BAE75528.1"/>
    <property type="molecule type" value="Genomic_DNA"/>
</dbReference>
<dbReference type="RefSeq" id="WP_011412064.1">
    <property type="nucleotide sequence ID" value="NC_007712.1"/>
</dbReference>
<dbReference type="SMR" id="Q2NQP7"/>
<dbReference type="STRING" id="343509.SG2253"/>
<dbReference type="KEGG" id="sgl:SG2253"/>
<dbReference type="eggNOG" id="COG0202">
    <property type="taxonomic scope" value="Bacteria"/>
</dbReference>
<dbReference type="HOGENOM" id="CLU_053084_0_1_6"/>
<dbReference type="OrthoDB" id="9805706at2"/>
<dbReference type="BioCyc" id="SGLO343509:SGP1_RS20720-MONOMER"/>
<dbReference type="Proteomes" id="UP000001932">
    <property type="component" value="Chromosome"/>
</dbReference>
<dbReference type="GO" id="GO:0005737">
    <property type="term" value="C:cytoplasm"/>
    <property type="evidence" value="ECO:0007669"/>
    <property type="project" value="UniProtKB-ARBA"/>
</dbReference>
<dbReference type="GO" id="GO:0000428">
    <property type="term" value="C:DNA-directed RNA polymerase complex"/>
    <property type="evidence" value="ECO:0007669"/>
    <property type="project" value="UniProtKB-KW"/>
</dbReference>
<dbReference type="GO" id="GO:0003677">
    <property type="term" value="F:DNA binding"/>
    <property type="evidence" value="ECO:0007669"/>
    <property type="project" value="UniProtKB-UniRule"/>
</dbReference>
<dbReference type="GO" id="GO:0003899">
    <property type="term" value="F:DNA-directed RNA polymerase activity"/>
    <property type="evidence" value="ECO:0007669"/>
    <property type="project" value="UniProtKB-UniRule"/>
</dbReference>
<dbReference type="GO" id="GO:0046983">
    <property type="term" value="F:protein dimerization activity"/>
    <property type="evidence" value="ECO:0007669"/>
    <property type="project" value="InterPro"/>
</dbReference>
<dbReference type="GO" id="GO:0006351">
    <property type="term" value="P:DNA-templated transcription"/>
    <property type="evidence" value="ECO:0007669"/>
    <property type="project" value="UniProtKB-UniRule"/>
</dbReference>
<dbReference type="CDD" id="cd06928">
    <property type="entry name" value="RNAP_alpha_NTD"/>
    <property type="match status" value="1"/>
</dbReference>
<dbReference type="FunFam" id="1.10.150.20:FF:000001">
    <property type="entry name" value="DNA-directed RNA polymerase subunit alpha"/>
    <property type="match status" value="1"/>
</dbReference>
<dbReference type="FunFam" id="2.170.120.12:FF:000001">
    <property type="entry name" value="DNA-directed RNA polymerase subunit alpha"/>
    <property type="match status" value="1"/>
</dbReference>
<dbReference type="Gene3D" id="1.10.150.20">
    <property type="entry name" value="5' to 3' exonuclease, C-terminal subdomain"/>
    <property type="match status" value="1"/>
</dbReference>
<dbReference type="Gene3D" id="2.170.120.12">
    <property type="entry name" value="DNA-directed RNA polymerase, insert domain"/>
    <property type="match status" value="1"/>
</dbReference>
<dbReference type="Gene3D" id="3.30.1360.10">
    <property type="entry name" value="RNA polymerase, RBP11-like subunit"/>
    <property type="match status" value="1"/>
</dbReference>
<dbReference type="HAMAP" id="MF_00059">
    <property type="entry name" value="RNApol_bact_RpoA"/>
    <property type="match status" value="1"/>
</dbReference>
<dbReference type="InterPro" id="IPR011262">
    <property type="entry name" value="DNA-dir_RNA_pol_insert"/>
</dbReference>
<dbReference type="InterPro" id="IPR011263">
    <property type="entry name" value="DNA-dir_RNA_pol_RpoA/D/Rpb3"/>
</dbReference>
<dbReference type="InterPro" id="IPR011773">
    <property type="entry name" value="DNA-dir_RpoA"/>
</dbReference>
<dbReference type="InterPro" id="IPR036603">
    <property type="entry name" value="RBP11-like"/>
</dbReference>
<dbReference type="InterPro" id="IPR011260">
    <property type="entry name" value="RNAP_asu_C"/>
</dbReference>
<dbReference type="InterPro" id="IPR036643">
    <property type="entry name" value="RNApol_insert_sf"/>
</dbReference>
<dbReference type="NCBIfam" id="NF003513">
    <property type="entry name" value="PRK05182.1-2"/>
    <property type="match status" value="1"/>
</dbReference>
<dbReference type="NCBIfam" id="NF003519">
    <property type="entry name" value="PRK05182.2-5"/>
    <property type="match status" value="1"/>
</dbReference>
<dbReference type="NCBIfam" id="TIGR02027">
    <property type="entry name" value="rpoA"/>
    <property type="match status" value="1"/>
</dbReference>
<dbReference type="Pfam" id="PF01000">
    <property type="entry name" value="RNA_pol_A_bac"/>
    <property type="match status" value="1"/>
</dbReference>
<dbReference type="Pfam" id="PF03118">
    <property type="entry name" value="RNA_pol_A_CTD"/>
    <property type="match status" value="1"/>
</dbReference>
<dbReference type="Pfam" id="PF01193">
    <property type="entry name" value="RNA_pol_L"/>
    <property type="match status" value="1"/>
</dbReference>
<dbReference type="SMART" id="SM00662">
    <property type="entry name" value="RPOLD"/>
    <property type="match status" value="1"/>
</dbReference>
<dbReference type="SUPFAM" id="SSF47789">
    <property type="entry name" value="C-terminal domain of RNA polymerase alpha subunit"/>
    <property type="match status" value="1"/>
</dbReference>
<dbReference type="SUPFAM" id="SSF56553">
    <property type="entry name" value="Insert subdomain of RNA polymerase alpha subunit"/>
    <property type="match status" value="1"/>
</dbReference>
<dbReference type="SUPFAM" id="SSF55257">
    <property type="entry name" value="RBP11-like subunits of RNA polymerase"/>
    <property type="match status" value="1"/>
</dbReference>
<name>RPOA_SODGM</name>
<evidence type="ECO:0000255" key="1">
    <source>
        <dbReference type="HAMAP-Rule" id="MF_00059"/>
    </source>
</evidence>
<comment type="function">
    <text evidence="1">DNA-dependent RNA polymerase catalyzes the transcription of DNA into RNA using the four ribonucleoside triphosphates as substrates.</text>
</comment>
<comment type="catalytic activity">
    <reaction evidence="1">
        <text>RNA(n) + a ribonucleoside 5'-triphosphate = RNA(n+1) + diphosphate</text>
        <dbReference type="Rhea" id="RHEA:21248"/>
        <dbReference type="Rhea" id="RHEA-COMP:14527"/>
        <dbReference type="Rhea" id="RHEA-COMP:17342"/>
        <dbReference type="ChEBI" id="CHEBI:33019"/>
        <dbReference type="ChEBI" id="CHEBI:61557"/>
        <dbReference type="ChEBI" id="CHEBI:140395"/>
        <dbReference type="EC" id="2.7.7.6"/>
    </reaction>
</comment>
<comment type="subunit">
    <text evidence="1">Homodimer. The RNAP catalytic core consists of 2 alpha, 1 beta, 1 beta' and 1 omega subunit. When a sigma factor is associated with the core the holoenzyme is formed, which can initiate transcription.</text>
</comment>
<comment type="domain">
    <text evidence="1">The N-terminal domain is essential for RNAP assembly and basal transcription, whereas the C-terminal domain is involved in interaction with transcriptional regulators and with upstream promoter elements.</text>
</comment>
<comment type="similarity">
    <text evidence="1">Belongs to the RNA polymerase alpha chain family.</text>
</comment>
<keyword id="KW-0240">DNA-directed RNA polymerase</keyword>
<keyword id="KW-0548">Nucleotidyltransferase</keyword>
<keyword id="KW-0804">Transcription</keyword>
<keyword id="KW-0808">Transferase</keyword>
<feature type="chain" id="PRO_0000264548" description="DNA-directed RNA polymerase subunit alpha">
    <location>
        <begin position="1"/>
        <end position="329"/>
    </location>
</feature>
<feature type="region of interest" description="Alpha N-terminal domain (alpha-NTD)" evidence="1">
    <location>
        <begin position="1"/>
        <end position="235"/>
    </location>
</feature>
<feature type="region of interest" description="Alpha C-terminal domain (alpha-CTD)" evidence="1">
    <location>
        <begin position="249"/>
        <end position="329"/>
    </location>
</feature>
<reference key="1">
    <citation type="journal article" date="2006" name="Genome Res.">
        <title>Massive genome erosion and functional adaptations provide insights into the symbiotic lifestyle of Sodalis glossinidius in the tsetse host.</title>
        <authorList>
            <person name="Toh H."/>
            <person name="Weiss B.L."/>
            <person name="Perkin S.A.H."/>
            <person name="Yamashita A."/>
            <person name="Oshima K."/>
            <person name="Hattori M."/>
            <person name="Aksoy S."/>
        </authorList>
    </citation>
    <scope>NUCLEOTIDE SEQUENCE [LARGE SCALE GENOMIC DNA]</scope>
    <source>
        <strain>morsitans</strain>
    </source>
</reference>
<sequence length="329" mass="36472">MQGSVTEFLKPRLVDIEQVSSTHAKVTLEPLERGFGHTLGNALRRILLSSMPGCAVTEVEIDGVLHEYSTKEGVQEDILEILLNLKGLAVKVQGKDDVILTLNKSGIGPVTAADITHDGDVEIVKPQHVLCHLTDENAAISMRIKVQRGRGYVPASARIHSEEYERPIGRLLVDACYSPVERIAYNVEAARVEQRTDLDKLVIEMETNGTIDPEEAIRRAATILAEQLEAFVDLRDVRQPEVKEEKPEFDPILLRPVDDLELTVRSANCLKAEAIHYIGDLVQRTEVELLKTPNLGKKSLTEIKDVLASRGLSLGMRLENWPPASIADE</sequence>
<accession>Q2NQP7</accession>
<protein>
    <recommendedName>
        <fullName evidence="1">DNA-directed RNA polymerase subunit alpha</fullName>
        <shortName evidence="1">RNAP subunit alpha</shortName>
        <ecNumber evidence="1">2.7.7.6</ecNumber>
    </recommendedName>
    <alternativeName>
        <fullName evidence="1">RNA polymerase subunit alpha</fullName>
    </alternativeName>
    <alternativeName>
        <fullName evidence="1">Transcriptase subunit alpha</fullName>
    </alternativeName>
</protein>
<gene>
    <name evidence="1" type="primary">rpoA</name>
    <name type="ordered locus">SG2253</name>
</gene>